<sequence>MTLDANDKLLEAVLQEYKILAEYERLQSEDLGGIYVTPSYENPFLWFGVIFVRSGMYKDGVFRFTISLPNRFPNDSTVPVVAFQSDVFHPMVNPSDGVLNLSDTFPKWQSGDSHIWQMLKFVQFILQNLDDHTIPSEHVVNNEAYQLLMENRAEFLLRVEQCVEDSQRKLYDLPAQPDRFYICFDRFNPDVHGPVLQSMKEDKPTEVTTPPSSGLSWVRKGFYQPLSK</sequence>
<name>AKTIP_ANOGA</name>
<dbReference type="EMBL" id="AAAB01008849">
    <property type="protein sequence ID" value="EAA07209.4"/>
    <property type="molecule type" value="Genomic_DNA"/>
</dbReference>
<dbReference type="SMR" id="Q7PRH1"/>
<dbReference type="FunCoup" id="Q7PRH1">
    <property type="interactions" value="1132"/>
</dbReference>
<dbReference type="STRING" id="7165.Q7PRH1"/>
<dbReference type="PaxDb" id="7165-AGAP010478-PA"/>
<dbReference type="EnsemblMetazoa" id="AGAP010478-RA">
    <property type="protein sequence ID" value="AGAP010478-PA"/>
    <property type="gene ID" value="AGAP010478"/>
</dbReference>
<dbReference type="GeneID" id="1272603"/>
<dbReference type="KEGG" id="aga:1272603"/>
<dbReference type="VEuPathDB" id="VectorBase:AGAMI1_009053"/>
<dbReference type="VEuPathDB" id="VectorBase:AGAP010478"/>
<dbReference type="eggNOG" id="KOG0429">
    <property type="taxonomic scope" value="Eukaryota"/>
</dbReference>
<dbReference type="HOGENOM" id="CLU_083049_1_0_1"/>
<dbReference type="InParanoid" id="Q7PRH1"/>
<dbReference type="OMA" id="WGFPEWR"/>
<dbReference type="OrthoDB" id="5596422at2759"/>
<dbReference type="PhylomeDB" id="Q7PRH1"/>
<dbReference type="Proteomes" id="UP000007062">
    <property type="component" value="Chromosome 3L"/>
</dbReference>
<dbReference type="CDD" id="cd23814">
    <property type="entry name" value="UEV_AKTIP"/>
    <property type="match status" value="1"/>
</dbReference>
<dbReference type="Gene3D" id="3.10.110.10">
    <property type="entry name" value="Ubiquitin Conjugating Enzyme"/>
    <property type="match status" value="1"/>
</dbReference>
<dbReference type="InterPro" id="IPR050113">
    <property type="entry name" value="Ub_conjugating_enzyme"/>
</dbReference>
<dbReference type="InterPro" id="IPR000608">
    <property type="entry name" value="UBQ-conjugat_E2_core"/>
</dbReference>
<dbReference type="InterPro" id="IPR016135">
    <property type="entry name" value="UBQ-conjugating_enzyme/RWD"/>
</dbReference>
<dbReference type="PANTHER" id="PTHR24067">
    <property type="entry name" value="UBIQUITIN-CONJUGATING ENZYME E2"/>
    <property type="match status" value="1"/>
</dbReference>
<dbReference type="Pfam" id="PF00179">
    <property type="entry name" value="UQ_con"/>
    <property type="match status" value="1"/>
</dbReference>
<dbReference type="SMART" id="SM00212">
    <property type="entry name" value="UBCc"/>
    <property type="match status" value="1"/>
</dbReference>
<dbReference type="SUPFAM" id="SSF54495">
    <property type="entry name" value="UBC-like"/>
    <property type="match status" value="1"/>
</dbReference>
<dbReference type="PROSITE" id="PS50127">
    <property type="entry name" value="UBC_2"/>
    <property type="match status" value="1"/>
</dbReference>
<protein>
    <recommendedName>
        <fullName>Protein crossbronx homolog</fullName>
    </recommendedName>
</protein>
<organism>
    <name type="scientific">Anopheles gambiae</name>
    <name type="common">African malaria mosquito</name>
    <dbReference type="NCBI Taxonomy" id="7165"/>
    <lineage>
        <taxon>Eukaryota</taxon>
        <taxon>Metazoa</taxon>
        <taxon>Ecdysozoa</taxon>
        <taxon>Arthropoda</taxon>
        <taxon>Hexapoda</taxon>
        <taxon>Insecta</taxon>
        <taxon>Pterygota</taxon>
        <taxon>Neoptera</taxon>
        <taxon>Endopterygota</taxon>
        <taxon>Diptera</taxon>
        <taxon>Nematocera</taxon>
        <taxon>Culicoidea</taxon>
        <taxon>Culicidae</taxon>
        <taxon>Anophelinae</taxon>
        <taxon>Anopheles</taxon>
    </lineage>
</organism>
<comment type="similarity">
    <text evidence="1">Belongs to the ubiquitin-conjugating enzyme family. FTS subfamily.</text>
</comment>
<comment type="caution">
    <text evidence="2">Lacks the conserved Cys residue necessary for ubiquitin-conjugating enzyme E2 activity.</text>
</comment>
<accession>Q7PRH1</accession>
<proteinExistence type="inferred from homology"/>
<gene>
    <name type="ORF">AGAP010478</name>
</gene>
<reference key="1">
    <citation type="journal article" date="2002" name="Science">
        <title>The genome sequence of the malaria mosquito Anopheles gambiae.</title>
        <authorList>
            <person name="Holt R.A."/>
            <person name="Subramanian G.M."/>
            <person name="Halpern A."/>
            <person name="Sutton G.G."/>
            <person name="Charlab R."/>
            <person name="Nusskern D.R."/>
            <person name="Wincker P."/>
            <person name="Clark A.G."/>
            <person name="Ribeiro J.M.C."/>
            <person name="Wides R."/>
            <person name="Salzberg S.L."/>
            <person name="Loftus B.J."/>
            <person name="Yandell M.D."/>
            <person name="Majoros W.H."/>
            <person name="Rusch D.B."/>
            <person name="Lai Z."/>
            <person name="Kraft C.L."/>
            <person name="Abril J.F."/>
            <person name="Anthouard V."/>
            <person name="Arensburger P."/>
            <person name="Atkinson P.W."/>
            <person name="Baden H."/>
            <person name="de Berardinis V."/>
            <person name="Baldwin D."/>
            <person name="Benes V."/>
            <person name="Biedler J."/>
            <person name="Blass C."/>
            <person name="Bolanos R."/>
            <person name="Boscus D."/>
            <person name="Barnstead M."/>
            <person name="Cai S."/>
            <person name="Center A."/>
            <person name="Chaturverdi K."/>
            <person name="Christophides G.K."/>
            <person name="Chrystal M.A.M."/>
            <person name="Clamp M."/>
            <person name="Cravchik A."/>
            <person name="Curwen V."/>
            <person name="Dana A."/>
            <person name="Delcher A."/>
            <person name="Dew I."/>
            <person name="Evans C.A."/>
            <person name="Flanigan M."/>
            <person name="Grundschober-Freimoser A."/>
            <person name="Friedli L."/>
            <person name="Gu Z."/>
            <person name="Guan P."/>
            <person name="Guigo R."/>
            <person name="Hillenmeyer M.E."/>
            <person name="Hladun S.L."/>
            <person name="Hogan J.R."/>
            <person name="Hong Y.S."/>
            <person name="Hoover J."/>
            <person name="Jaillon O."/>
            <person name="Ke Z."/>
            <person name="Kodira C.D."/>
            <person name="Kokoza E."/>
            <person name="Koutsos A."/>
            <person name="Letunic I."/>
            <person name="Levitsky A.A."/>
            <person name="Liang Y."/>
            <person name="Lin J.-J."/>
            <person name="Lobo N.F."/>
            <person name="Lopez J.R."/>
            <person name="Malek J.A."/>
            <person name="McIntosh T.C."/>
            <person name="Meister S."/>
            <person name="Miller J.R."/>
            <person name="Mobarry C."/>
            <person name="Mongin E."/>
            <person name="Murphy S.D."/>
            <person name="O'Brochta D.A."/>
            <person name="Pfannkoch C."/>
            <person name="Qi R."/>
            <person name="Regier M.A."/>
            <person name="Remington K."/>
            <person name="Shao H."/>
            <person name="Sharakhova M.V."/>
            <person name="Sitter C.D."/>
            <person name="Shetty J."/>
            <person name="Smith T.J."/>
            <person name="Strong R."/>
            <person name="Sun J."/>
            <person name="Thomasova D."/>
            <person name="Ton L.Q."/>
            <person name="Topalis P."/>
            <person name="Tu Z.J."/>
            <person name="Unger M.F."/>
            <person name="Walenz B."/>
            <person name="Wang A.H."/>
            <person name="Wang J."/>
            <person name="Wang M."/>
            <person name="Wang X."/>
            <person name="Woodford K.J."/>
            <person name="Wortman J.R."/>
            <person name="Wu M."/>
            <person name="Yao A."/>
            <person name="Zdobnov E.M."/>
            <person name="Zhang H."/>
            <person name="Zhao Q."/>
            <person name="Zhao S."/>
            <person name="Zhu S.C."/>
            <person name="Zhimulev I."/>
            <person name="Coluzzi M."/>
            <person name="della Torre A."/>
            <person name="Roth C.W."/>
            <person name="Louis C."/>
            <person name="Kalush F."/>
            <person name="Mural R.J."/>
            <person name="Myers E.W."/>
            <person name="Adams M.D."/>
            <person name="Smith H.O."/>
            <person name="Broder S."/>
            <person name="Gardner M.J."/>
            <person name="Fraser C.M."/>
            <person name="Birney E."/>
            <person name="Bork P."/>
            <person name="Brey P.T."/>
            <person name="Venter J.C."/>
            <person name="Weissenbach J."/>
            <person name="Kafatos F.C."/>
            <person name="Collins F.H."/>
            <person name="Hoffman S.L."/>
        </authorList>
    </citation>
    <scope>NUCLEOTIDE SEQUENCE [LARGE SCALE GENOMIC DNA]</scope>
    <source>
        <strain>PEST</strain>
    </source>
</reference>
<feature type="chain" id="PRO_0000379027" description="Protein crossbronx homolog">
    <location>
        <begin position="1"/>
        <end position="228"/>
    </location>
</feature>
<feature type="domain" description="UBC core" evidence="1">
    <location>
        <begin position="14"/>
        <end position="168"/>
    </location>
</feature>
<evidence type="ECO:0000255" key="1">
    <source>
        <dbReference type="PROSITE-ProRule" id="PRU00388"/>
    </source>
</evidence>
<evidence type="ECO:0000305" key="2"/>
<keyword id="KW-1185">Reference proteome</keyword>